<accession>C6E7M0</accession>
<proteinExistence type="inferred from homology"/>
<organism>
    <name type="scientific">Geobacter sp. (strain M21)</name>
    <dbReference type="NCBI Taxonomy" id="443144"/>
    <lineage>
        <taxon>Bacteria</taxon>
        <taxon>Pseudomonadati</taxon>
        <taxon>Thermodesulfobacteriota</taxon>
        <taxon>Desulfuromonadia</taxon>
        <taxon>Geobacterales</taxon>
        <taxon>Geobacteraceae</taxon>
        <taxon>Geobacter</taxon>
    </lineage>
</organism>
<comment type="function">
    <text evidence="1">Catalyzes the transfer of a phosphate group to glutamate to form L-glutamate 5-phosphate.</text>
</comment>
<comment type="catalytic activity">
    <reaction evidence="1">
        <text>L-glutamate + ATP = L-glutamyl 5-phosphate + ADP</text>
        <dbReference type="Rhea" id="RHEA:14877"/>
        <dbReference type="ChEBI" id="CHEBI:29985"/>
        <dbReference type="ChEBI" id="CHEBI:30616"/>
        <dbReference type="ChEBI" id="CHEBI:58274"/>
        <dbReference type="ChEBI" id="CHEBI:456216"/>
        <dbReference type="EC" id="2.7.2.11"/>
    </reaction>
</comment>
<comment type="pathway">
    <text evidence="1">Amino-acid biosynthesis; L-proline biosynthesis; L-glutamate 5-semialdehyde from L-glutamate: step 1/2.</text>
</comment>
<comment type="subcellular location">
    <subcellularLocation>
        <location evidence="1">Cytoplasm</location>
    </subcellularLocation>
</comment>
<comment type="similarity">
    <text evidence="1">Belongs to the glutamate 5-kinase family.</text>
</comment>
<gene>
    <name evidence="1" type="primary">proB</name>
    <name type="ordered locus">GM21_3863</name>
</gene>
<keyword id="KW-0028">Amino-acid biosynthesis</keyword>
<keyword id="KW-0067">ATP-binding</keyword>
<keyword id="KW-0963">Cytoplasm</keyword>
<keyword id="KW-0418">Kinase</keyword>
<keyword id="KW-0547">Nucleotide-binding</keyword>
<keyword id="KW-0641">Proline biosynthesis</keyword>
<keyword id="KW-0808">Transferase</keyword>
<evidence type="ECO:0000255" key="1">
    <source>
        <dbReference type="HAMAP-Rule" id="MF_00456"/>
    </source>
</evidence>
<dbReference type="EC" id="2.7.2.11" evidence="1"/>
<dbReference type="EMBL" id="CP001661">
    <property type="protein sequence ID" value="ACT19880.1"/>
    <property type="molecule type" value="Genomic_DNA"/>
</dbReference>
<dbReference type="SMR" id="C6E7M0"/>
<dbReference type="STRING" id="443144.GM21_3863"/>
<dbReference type="KEGG" id="gem:GM21_3863"/>
<dbReference type="eggNOG" id="COG0263">
    <property type="taxonomic scope" value="Bacteria"/>
</dbReference>
<dbReference type="HOGENOM" id="CLU_025400_2_0_7"/>
<dbReference type="OrthoDB" id="9804434at2"/>
<dbReference type="UniPathway" id="UPA00098">
    <property type="reaction ID" value="UER00359"/>
</dbReference>
<dbReference type="GO" id="GO:0005829">
    <property type="term" value="C:cytosol"/>
    <property type="evidence" value="ECO:0007669"/>
    <property type="project" value="TreeGrafter"/>
</dbReference>
<dbReference type="GO" id="GO:0005524">
    <property type="term" value="F:ATP binding"/>
    <property type="evidence" value="ECO:0007669"/>
    <property type="project" value="UniProtKB-KW"/>
</dbReference>
<dbReference type="GO" id="GO:0004349">
    <property type="term" value="F:glutamate 5-kinase activity"/>
    <property type="evidence" value="ECO:0007669"/>
    <property type="project" value="UniProtKB-UniRule"/>
</dbReference>
<dbReference type="GO" id="GO:0003723">
    <property type="term" value="F:RNA binding"/>
    <property type="evidence" value="ECO:0007669"/>
    <property type="project" value="InterPro"/>
</dbReference>
<dbReference type="GO" id="GO:0055129">
    <property type="term" value="P:L-proline biosynthetic process"/>
    <property type="evidence" value="ECO:0007669"/>
    <property type="project" value="UniProtKB-UniRule"/>
</dbReference>
<dbReference type="CDD" id="cd04242">
    <property type="entry name" value="AAK_G5K_ProB"/>
    <property type="match status" value="1"/>
</dbReference>
<dbReference type="CDD" id="cd21157">
    <property type="entry name" value="PUA_G5K"/>
    <property type="match status" value="1"/>
</dbReference>
<dbReference type="FunFam" id="2.30.130.10:FF:000007">
    <property type="entry name" value="Glutamate 5-kinase"/>
    <property type="match status" value="1"/>
</dbReference>
<dbReference type="FunFam" id="3.40.1160.10:FF:000018">
    <property type="entry name" value="Glutamate 5-kinase"/>
    <property type="match status" value="1"/>
</dbReference>
<dbReference type="Gene3D" id="3.40.1160.10">
    <property type="entry name" value="Acetylglutamate kinase-like"/>
    <property type="match status" value="1"/>
</dbReference>
<dbReference type="Gene3D" id="2.30.130.10">
    <property type="entry name" value="PUA domain"/>
    <property type="match status" value="1"/>
</dbReference>
<dbReference type="HAMAP" id="MF_00456">
    <property type="entry name" value="ProB"/>
    <property type="match status" value="1"/>
</dbReference>
<dbReference type="InterPro" id="IPR036393">
    <property type="entry name" value="AceGlu_kinase-like_sf"/>
</dbReference>
<dbReference type="InterPro" id="IPR001048">
    <property type="entry name" value="Asp/Glu/Uridylate_kinase"/>
</dbReference>
<dbReference type="InterPro" id="IPR041739">
    <property type="entry name" value="G5K_ProB"/>
</dbReference>
<dbReference type="InterPro" id="IPR001057">
    <property type="entry name" value="Glu/AcGlu_kinase"/>
</dbReference>
<dbReference type="InterPro" id="IPR011529">
    <property type="entry name" value="Glu_5kinase"/>
</dbReference>
<dbReference type="InterPro" id="IPR005715">
    <property type="entry name" value="Glu_5kinase/COase_Synthase"/>
</dbReference>
<dbReference type="InterPro" id="IPR019797">
    <property type="entry name" value="Glutamate_5-kinase_CS"/>
</dbReference>
<dbReference type="InterPro" id="IPR002478">
    <property type="entry name" value="PUA"/>
</dbReference>
<dbReference type="InterPro" id="IPR015947">
    <property type="entry name" value="PUA-like_sf"/>
</dbReference>
<dbReference type="InterPro" id="IPR036974">
    <property type="entry name" value="PUA_sf"/>
</dbReference>
<dbReference type="NCBIfam" id="TIGR01027">
    <property type="entry name" value="proB"/>
    <property type="match status" value="1"/>
</dbReference>
<dbReference type="PANTHER" id="PTHR43654">
    <property type="entry name" value="GLUTAMATE 5-KINASE"/>
    <property type="match status" value="1"/>
</dbReference>
<dbReference type="PANTHER" id="PTHR43654:SF1">
    <property type="entry name" value="ISOPENTENYL PHOSPHATE KINASE"/>
    <property type="match status" value="1"/>
</dbReference>
<dbReference type="Pfam" id="PF00696">
    <property type="entry name" value="AA_kinase"/>
    <property type="match status" value="1"/>
</dbReference>
<dbReference type="Pfam" id="PF01472">
    <property type="entry name" value="PUA"/>
    <property type="match status" value="1"/>
</dbReference>
<dbReference type="PIRSF" id="PIRSF000729">
    <property type="entry name" value="GK"/>
    <property type="match status" value="1"/>
</dbReference>
<dbReference type="PRINTS" id="PR00474">
    <property type="entry name" value="GLU5KINASE"/>
</dbReference>
<dbReference type="SMART" id="SM00359">
    <property type="entry name" value="PUA"/>
    <property type="match status" value="1"/>
</dbReference>
<dbReference type="SUPFAM" id="SSF53633">
    <property type="entry name" value="Carbamate kinase-like"/>
    <property type="match status" value="1"/>
</dbReference>
<dbReference type="SUPFAM" id="SSF88697">
    <property type="entry name" value="PUA domain-like"/>
    <property type="match status" value="1"/>
</dbReference>
<dbReference type="PROSITE" id="PS00902">
    <property type="entry name" value="GLUTAMATE_5_KINASE"/>
    <property type="match status" value="1"/>
</dbReference>
<dbReference type="PROSITE" id="PS50890">
    <property type="entry name" value="PUA"/>
    <property type="match status" value="1"/>
</dbReference>
<reference key="1">
    <citation type="submission" date="2009-07" db="EMBL/GenBank/DDBJ databases">
        <title>Complete sequence of Geobacter sp. M21.</title>
        <authorList>
            <consortium name="US DOE Joint Genome Institute"/>
            <person name="Lucas S."/>
            <person name="Copeland A."/>
            <person name="Lapidus A."/>
            <person name="Glavina del Rio T."/>
            <person name="Dalin E."/>
            <person name="Tice H."/>
            <person name="Bruce D."/>
            <person name="Goodwin L."/>
            <person name="Pitluck S."/>
            <person name="Saunders E."/>
            <person name="Brettin T."/>
            <person name="Detter J.C."/>
            <person name="Han C."/>
            <person name="Larimer F."/>
            <person name="Land M."/>
            <person name="Hauser L."/>
            <person name="Kyrpides N."/>
            <person name="Ovchinnikova G."/>
            <person name="Lovley D."/>
        </authorList>
    </citation>
    <scope>NUCLEOTIDE SEQUENCE [LARGE SCALE GENOMIC DNA]</scope>
    <source>
        <strain>M21</strain>
    </source>
</reference>
<sequence length="373" mass="39783">MRKELLKKVKRVVVKIGSGVLTGENGGVDPGFLDGLAAQVAELSGQGTEVVIVSSGAVAAGRQALGLPDRPRTLPQKQAAAAVGQSRLMRAYEEAFSSYDLKVAQILLTRDDLANRRRFQNARGTLDTLLACGIIPVINENDTVVVDELKFGDNDNLSALVTNLVEAQLLLIMTDIDGLYTADPRTDPNATLIHQVGAVTRELERGAGGSGTSVGTGGMATKLAAAKKVVKSGVAAIIFAGRGERTLSRVMKGELLGTLFLPAGESLNRRKHWIAFTIKPAGSIVVDAGARDVLARHGRSLLPSGIAQVEGRFDRGACVRVLDPDGVEFARGITDYSSQEVEKIRGHQSSEIERILGFRYGDDVIHRDNLVLL</sequence>
<protein>
    <recommendedName>
        <fullName evidence="1">Glutamate 5-kinase</fullName>
        <ecNumber evidence="1">2.7.2.11</ecNumber>
    </recommendedName>
    <alternativeName>
        <fullName evidence="1">Gamma-glutamyl kinase</fullName>
        <shortName evidence="1">GK</shortName>
    </alternativeName>
</protein>
<feature type="chain" id="PRO_1000206270" description="Glutamate 5-kinase">
    <location>
        <begin position="1"/>
        <end position="373"/>
    </location>
</feature>
<feature type="domain" description="PUA" evidence="1">
    <location>
        <begin position="281"/>
        <end position="359"/>
    </location>
</feature>
<feature type="binding site" evidence="1">
    <location>
        <position position="15"/>
    </location>
    <ligand>
        <name>ATP</name>
        <dbReference type="ChEBI" id="CHEBI:30616"/>
    </ligand>
</feature>
<feature type="binding site" evidence="1">
    <location>
        <position position="55"/>
    </location>
    <ligand>
        <name>substrate</name>
    </ligand>
</feature>
<feature type="binding site" evidence="1">
    <location>
        <position position="142"/>
    </location>
    <ligand>
        <name>substrate</name>
    </ligand>
</feature>
<feature type="binding site" evidence="1">
    <location>
        <position position="154"/>
    </location>
    <ligand>
        <name>substrate</name>
    </ligand>
</feature>
<feature type="binding site" evidence="1">
    <location>
        <begin position="174"/>
        <end position="175"/>
    </location>
    <ligand>
        <name>ATP</name>
        <dbReference type="ChEBI" id="CHEBI:30616"/>
    </ligand>
</feature>
<feature type="binding site" evidence="1">
    <location>
        <begin position="216"/>
        <end position="222"/>
    </location>
    <ligand>
        <name>ATP</name>
        <dbReference type="ChEBI" id="CHEBI:30616"/>
    </ligand>
</feature>
<name>PROB_GEOSM</name>